<reference key="1">
    <citation type="journal article" date="2005" name="Nature">
        <title>Virology: independent virus development outside a host.</title>
        <authorList>
            <person name="Haring M."/>
            <person name="Vestergaard G."/>
            <person name="Rachel R."/>
            <person name="Chen L."/>
            <person name="Garrett R.A."/>
            <person name="Prangishvili D."/>
        </authorList>
    </citation>
    <scope>NUCLEOTIDE SEQUENCE [GENOMIC DNA]</scope>
</reference>
<organism>
    <name type="scientific">Acidianus two-tailed virus</name>
    <name type="common">ATV</name>
    <dbReference type="NCBI Taxonomy" id="315953"/>
    <lineage>
        <taxon>Viruses</taxon>
        <taxon>Viruses incertae sedis</taxon>
        <taxon>Bicaudaviridae</taxon>
        <taxon>Bicaudavirus</taxon>
    </lineage>
</organism>
<accession>Q3V4W2</accession>
<keyword id="KW-1185">Reference proteome</keyword>
<proteinExistence type="predicted"/>
<protein>
    <recommendedName>
        <fullName>Uncharacterized protein ORF45</fullName>
    </recommendedName>
</protein>
<dbReference type="EMBL" id="AJ888457">
    <property type="protein sequence ID" value="CAI59852.1"/>
    <property type="molecule type" value="Genomic_DNA"/>
</dbReference>
<dbReference type="RefSeq" id="YP_319851.1">
    <property type="nucleotide sequence ID" value="NC_007409.1"/>
</dbReference>
<dbReference type="GeneID" id="4484227"/>
<dbReference type="KEGG" id="vg:4484227"/>
<dbReference type="Proteomes" id="UP000002150">
    <property type="component" value="Genome"/>
</dbReference>
<name>Y045_ATV</name>
<feature type="chain" id="PRO_0000389076" description="Uncharacterized protein ORF45">
    <location>
        <begin position="1"/>
        <end position="45"/>
    </location>
</feature>
<sequence length="45" mass="5103">MSHCAGLLVLACASWCYSVLLPIVYSSATLQYRPSVRYIYTLYII</sequence>
<organismHost>
    <name type="scientific">Acidianus convivator</name>
    <dbReference type="NCBI Taxonomy" id="269667"/>
</organismHost>